<gene>
    <name type="ordered locus">PC1_2778</name>
</gene>
<proteinExistence type="inferred from homology"/>
<evidence type="ECO:0000255" key="1">
    <source>
        <dbReference type="HAMAP-Rule" id="MF_00762"/>
    </source>
</evidence>
<comment type="similarity">
    <text evidence="1">Belongs to the UPF0304 family.</text>
</comment>
<dbReference type="EMBL" id="CP001657">
    <property type="protein sequence ID" value="ACT13808.1"/>
    <property type="molecule type" value="Genomic_DNA"/>
</dbReference>
<dbReference type="RefSeq" id="WP_010295396.1">
    <property type="nucleotide sequence ID" value="NC_012917.1"/>
</dbReference>
<dbReference type="SMR" id="C6DA52"/>
<dbReference type="STRING" id="561230.PC1_2778"/>
<dbReference type="KEGG" id="pct:PC1_2778"/>
<dbReference type="eggNOG" id="COG3013">
    <property type="taxonomic scope" value="Bacteria"/>
</dbReference>
<dbReference type="HOGENOM" id="CLU_101021_1_0_6"/>
<dbReference type="OrthoDB" id="5589463at2"/>
<dbReference type="Proteomes" id="UP000002736">
    <property type="component" value="Chromosome"/>
</dbReference>
<dbReference type="Gene3D" id="1.10.287.680">
    <property type="entry name" value="Helix hairpin bin"/>
    <property type="match status" value="1"/>
</dbReference>
<dbReference type="Gene3D" id="1.10.3190.10">
    <property type="entry name" value="yfbu gene product, domain 2"/>
    <property type="match status" value="1"/>
</dbReference>
<dbReference type="HAMAP" id="MF_00762">
    <property type="entry name" value="UPF0304"/>
    <property type="match status" value="1"/>
</dbReference>
<dbReference type="InterPro" id="IPR005587">
    <property type="entry name" value="UPF0304_YfbU"/>
</dbReference>
<dbReference type="InterPro" id="IPR023146">
    <property type="entry name" value="YfbU_alpha-helical_sf"/>
</dbReference>
<dbReference type="InterPro" id="IPR023145">
    <property type="entry name" value="YfbU_helix-hairpin_sf"/>
</dbReference>
<dbReference type="NCBIfam" id="NF003936">
    <property type="entry name" value="PRK05445.1"/>
    <property type="match status" value="1"/>
</dbReference>
<dbReference type="Pfam" id="PF03887">
    <property type="entry name" value="YfbU"/>
    <property type="match status" value="1"/>
</dbReference>
<dbReference type="PIRSF" id="PIRSF006272">
    <property type="entry name" value="UCP006272"/>
    <property type="match status" value="1"/>
</dbReference>
<dbReference type="SUPFAM" id="SSF116960">
    <property type="entry name" value="YfbU-like"/>
    <property type="match status" value="1"/>
</dbReference>
<feature type="chain" id="PRO_1000212885" description="UPF0304 protein PC1_2778">
    <location>
        <begin position="1"/>
        <end position="164"/>
    </location>
</feature>
<accession>C6DA52</accession>
<protein>
    <recommendedName>
        <fullName evidence="1">UPF0304 protein PC1_2778</fullName>
    </recommendedName>
</protein>
<reference key="1">
    <citation type="submission" date="2009-07" db="EMBL/GenBank/DDBJ databases">
        <title>Complete sequence of Pectobacterium carotovorum subsp. carotovorum PC1.</title>
        <authorList>
            <consortium name="US DOE Joint Genome Institute"/>
            <person name="Lucas S."/>
            <person name="Copeland A."/>
            <person name="Lapidus A."/>
            <person name="Glavina del Rio T."/>
            <person name="Tice H."/>
            <person name="Bruce D."/>
            <person name="Goodwin L."/>
            <person name="Pitluck S."/>
            <person name="Munk A.C."/>
            <person name="Brettin T."/>
            <person name="Detter J.C."/>
            <person name="Han C."/>
            <person name="Tapia R."/>
            <person name="Larimer F."/>
            <person name="Land M."/>
            <person name="Hauser L."/>
            <person name="Kyrpides N."/>
            <person name="Mikhailova N."/>
            <person name="Balakrishnan V."/>
            <person name="Glasner J."/>
            <person name="Perna N.T."/>
        </authorList>
    </citation>
    <scope>NUCLEOTIDE SEQUENCE [LARGE SCALE GENOMIC DNA]</scope>
    <source>
        <strain>PC1</strain>
    </source>
</reference>
<organism>
    <name type="scientific">Pectobacterium carotovorum subsp. carotovorum (strain PC1)</name>
    <dbReference type="NCBI Taxonomy" id="561230"/>
    <lineage>
        <taxon>Bacteria</taxon>
        <taxon>Pseudomonadati</taxon>
        <taxon>Pseudomonadota</taxon>
        <taxon>Gammaproteobacteria</taxon>
        <taxon>Enterobacterales</taxon>
        <taxon>Pectobacteriaceae</taxon>
        <taxon>Pectobacterium</taxon>
    </lineage>
</organism>
<sequence>MEMTNAQRLILSNQYKMMTMLDPDNAERYRRLQTIIERGYGLQMRELDREFGELTEEVCRTIINIMEMHHALQVSWTNLKDKQDLDERRLTFLGFDAATEARYLGFVRFMVHVEGRYPHFDAGTHGFNAQTKMWEKYNRMLAVWQSCPRQYHLSAVEIAQIINA</sequence>
<name>Y2778_PECCP</name>